<feature type="chain" id="PRO_0000191119" description="Chaperone protein ClpB">
    <location>
        <begin position="1"/>
        <end position="865"/>
    </location>
</feature>
<feature type="domain" description="Clp R" evidence="2">
    <location>
        <begin position="3"/>
        <end position="151"/>
    </location>
</feature>
<feature type="region of interest" description="Repeat 1" evidence="2">
    <location>
        <begin position="6"/>
        <end position="71"/>
    </location>
</feature>
<feature type="region of interest" description="Repeat 2" evidence="2">
    <location>
        <begin position="86"/>
        <end position="151"/>
    </location>
</feature>
<feature type="region of interest" description="NBD1" evidence="1">
    <location>
        <begin position="164"/>
        <end position="345"/>
    </location>
</feature>
<feature type="region of interest" description="Linker" evidence="1">
    <location>
        <begin position="346"/>
        <end position="550"/>
    </location>
</feature>
<feature type="region of interest" description="NBD2" evidence="1">
    <location>
        <begin position="560"/>
        <end position="772"/>
    </location>
</feature>
<feature type="region of interest" description="C-terminal" evidence="1">
    <location>
        <begin position="773"/>
        <end position="865"/>
    </location>
</feature>
<feature type="coiled-coil region" evidence="1">
    <location>
        <begin position="396"/>
        <end position="530"/>
    </location>
</feature>
<feature type="binding site" evidence="1">
    <location>
        <begin position="211"/>
        <end position="218"/>
    </location>
    <ligand>
        <name>ATP</name>
        <dbReference type="ChEBI" id="CHEBI:30616"/>
        <label>1</label>
    </ligand>
</feature>
<feature type="binding site" evidence="1">
    <location>
        <begin position="610"/>
        <end position="617"/>
    </location>
    <ligand>
        <name>ATP</name>
        <dbReference type="ChEBI" id="CHEBI:30616"/>
        <label>2</label>
    </ligand>
</feature>
<gene>
    <name type="primary">clpB</name>
    <name type="ordered locus">DVU_1874</name>
</gene>
<name>CLPB_NITV2</name>
<reference key="1">
    <citation type="journal article" date="2004" name="Nat. Biotechnol.">
        <title>The genome sequence of the anaerobic, sulfate-reducing bacterium Desulfovibrio vulgaris Hildenborough.</title>
        <authorList>
            <person name="Heidelberg J.F."/>
            <person name="Seshadri R."/>
            <person name="Haveman S.A."/>
            <person name="Hemme C.L."/>
            <person name="Paulsen I.T."/>
            <person name="Kolonay J.F."/>
            <person name="Eisen J.A."/>
            <person name="Ward N.L."/>
            <person name="Methe B.A."/>
            <person name="Brinkac L.M."/>
            <person name="Daugherty S.C."/>
            <person name="DeBoy R.T."/>
            <person name="Dodson R.J."/>
            <person name="Durkin A.S."/>
            <person name="Madupu R."/>
            <person name="Nelson W.C."/>
            <person name="Sullivan S.A."/>
            <person name="Fouts D.E."/>
            <person name="Haft D.H."/>
            <person name="Selengut J."/>
            <person name="Peterson J.D."/>
            <person name="Davidsen T.M."/>
            <person name="Zafar N."/>
            <person name="Zhou L."/>
            <person name="Radune D."/>
            <person name="Dimitrov G."/>
            <person name="Hance M."/>
            <person name="Tran K."/>
            <person name="Khouri H.M."/>
            <person name="Gill J."/>
            <person name="Utterback T.R."/>
            <person name="Feldblyum T.V."/>
            <person name="Wall J.D."/>
            <person name="Voordouw G."/>
            <person name="Fraser C.M."/>
        </authorList>
    </citation>
    <scope>NUCLEOTIDE SEQUENCE [LARGE SCALE GENOMIC DNA]</scope>
    <source>
        <strain>ATCC 29579 / DSM 644 / CCUG 34227 / NCIMB 8303 / VKM B-1760 / Hildenborough</strain>
    </source>
</reference>
<proteinExistence type="inferred from homology"/>
<sequence>MDIGKFTEKSQQALAEAQNIAVRFGHQEVDAEHLADALVRQEQGLVPRLLDRMGQKPEAFAEALERELGKRPAVSGPGAAPGQIFVSKRLNAVLVKAQDFARQLKDEYVSVEHIFCVLLEEPASTIMGRIAREFSLSREKVLGVLEDVRGSQRVTSANPEDTYEALQKYGRDLVEEARKGKLDPVIGRDAEIRRVIRILSRRTKNNPVLIGEAGVGKTAIVEGLAHRILKGDVPEGLKERGLFALDMGALIAGAKYRGEFEERLKAVLKEVEKSEGRIIMFIDELHTIVGAGKTDGAMDASNLLKPMLARGELHCIGATTLDEYRKYIEKDPALERRFQPVLVDEPTIEDAISILRGLKERFEVHHGVRISDSAIVEAVTLSHRYITDRQLPDKAIDLIDEAAALIRTEIDSLPADLDEANRKIMQLEIEREALRRETDVASRERLERLENELADLRAEQTALLSQWEREKGSIDHVRSIKEDIERTRHAIEEAERAYDLNRAAELKYSRLLELERQLESAEKGGHDETRLLKEEVRPDDIAEIVARWTGIPVTRLLESEREKLLRLADVLHERVVGQEEAVDAVSEAVLRARAGLSDPSRPIGSFIFLGPTGVGKTELCKTLAEALFDTEENIVRLDMSEYMEKHAVARLIGAPPGYVGYDEGGQLTEAVRRKPYSVVLFDEVEKAHPDVFNTLLQILDDGRLTDSHGRTVDFRNTIIIMTSNIGSPYMLDGISEGGEFLSGVREKVMEELRRHFRPEFLNRVDETVLFKPLLPAQIARIVELLLGRLRGRLAERKIDIRLGDVARDFIAKAAYDPVYGARPLRRYLQHNIETPLARKLIAGELRDGTTVEVDVVDDALSFRIE</sequence>
<dbReference type="EMBL" id="AE017285">
    <property type="protein sequence ID" value="AAS96350.1"/>
    <property type="molecule type" value="Genomic_DNA"/>
</dbReference>
<dbReference type="RefSeq" id="WP_010939160.1">
    <property type="nucleotide sequence ID" value="NC_002937.3"/>
</dbReference>
<dbReference type="RefSeq" id="YP_011091.1">
    <property type="nucleotide sequence ID" value="NC_002937.3"/>
</dbReference>
<dbReference type="SMR" id="Q72AW6"/>
<dbReference type="STRING" id="882.DVU_1874"/>
<dbReference type="PaxDb" id="882-DVU_1874"/>
<dbReference type="EnsemblBacteria" id="AAS96350">
    <property type="protein sequence ID" value="AAS96350"/>
    <property type="gene ID" value="DVU_1874"/>
</dbReference>
<dbReference type="KEGG" id="dvu:DVU_1874"/>
<dbReference type="PATRIC" id="fig|882.5.peg.1716"/>
<dbReference type="eggNOG" id="COG0542">
    <property type="taxonomic scope" value="Bacteria"/>
</dbReference>
<dbReference type="HOGENOM" id="CLU_005070_4_2_7"/>
<dbReference type="OrthoDB" id="9803641at2"/>
<dbReference type="PhylomeDB" id="Q72AW6"/>
<dbReference type="Proteomes" id="UP000002194">
    <property type="component" value="Chromosome"/>
</dbReference>
<dbReference type="GO" id="GO:0005737">
    <property type="term" value="C:cytoplasm"/>
    <property type="evidence" value="ECO:0007669"/>
    <property type="project" value="UniProtKB-SubCell"/>
</dbReference>
<dbReference type="GO" id="GO:0005524">
    <property type="term" value="F:ATP binding"/>
    <property type="evidence" value="ECO:0007669"/>
    <property type="project" value="UniProtKB-KW"/>
</dbReference>
<dbReference type="GO" id="GO:0016887">
    <property type="term" value="F:ATP hydrolysis activity"/>
    <property type="evidence" value="ECO:0007669"/>
    <property type="project" value="InterPro"/>
</dbReference>
<dbReference type="GO" id="GO:0034605">
    <property type="term" value="P:cellular response to heat"/>
    <property type="evidence" value="ECO:0007669"/>
    <property type="project" value="TreeGrafter"/>
</dbReference>
<dbReference type="GO" id="GO:0042026">
    <property type="term" value="P:protein refolding"/>
    <property type="evidence" value="ECO:0007669"/>
    <property type="project" value="InterPro"/>
</dbReference>
<dbReference type="CDD" id="cd00009">
    <property type="entry name" value="AAA"/>
    <property type="match status" value="1"/>
</dbReference>
<dbReference type="CDD" id="cd19499">
    <property type="entry name" value="RecA-like_ClpB_Hsp104-like"/>
    <property type="match status" value="1"/>
</dbReference>
<dbReference type="FunFam" id="3.40.50.300:FF:000120">
    <property type="entry name" value="ATP-dependent chaperone ClpB"/>
    <property type="match status" value="1"/>
</dbReference>
<dbReference type="FunFam" id="3.40.50.300:FF:000025">
    <property type="entry name" value="ATP-dependent Clp protease subunit"/>
    <property type="match status" value="1"/>
</dbReference>
<dbReference type="FunFam" id="3.40.50.300:FF:000010">
    <property type="entry name" value="Chaperone clpB 1, putative"/>
    <property type="match status" value="1"/>
</dbReference>
<dbReference type="Gene3D" id="1.10.8.60">
    <property type="match status" value="1"/>
</dbReference>
<dbReference type="Gene3D" id="1.10.1780.10">
    <property type="entry name" value="Clp, N-terminal domain"/>
    <property type="match status" value="1"/>
</dbReference>
<dbReference type="Gene3D" id="3.40.50.300">
    <property type="entry name" value="P-loop containing nucleotide triphosphate hydrolases"/>
    <property type="match status" value="3"/>
</dbReference>
<dbReference type="InterPro" id="IPR003593">
    <property type="entry name" value="AAA+_ATPase"/>
</dbReference>
<dbReference type="InterPro" id="IPR003959">
    <property type="entry name" value="ATPase_AAA_core"/>
</dbReference>
<dbReference type="InterPro" id="IPR017730">
    <property type="entry name" value="Chaperonin_ClpB"/>
</dbReference>
<dbReference type="InterPro" id="IPR019489">
    <property type="entry name" value="Clp_ATPase_C"/>
</dbReference>
<dbReference type="InterPro" id="IPR036628">
    <property type="entry name" value="Clp_N_dom_sf"/>
</dbReference>
<dbReference type="InterPro" id="IPR004176">
    <property type="entry name" value="Clp_R_dom"/>
</dbReference>
<dbReference type="InterPro" id="IPR001270">
    <property type="entry name" value="ClpA/B"/>
</dbReference>
<dbReference type="InterPro" id="IPR018368">
    <property type="entry name" value="ClpA/B_CS1"/>
</dbReference>
<dbReference type="InterPro" id="IPR028299">
    <property type="entry name" value="ClpA/B_CS2"/>
</dbReference>
<dbReference type="InterPro" id="IPR041546">
    <property type="entry name" value="ClpA/ClpB_AAA_lid"/>
</dbReference>
<dbReference type="InterPro" id="IPR050130">
    <property type="entry name" value="ClpA_ClpB"/>
</dbReference>
<dbReference type="InterPro" id="IPR027417">
    <property type="entry name" value="P-loop_NTPase"/>
</dbReference>
<dbReference type="NCBIfam" id="TIGR03346">
    <property type="entry name" value="chaperone_ClpB"/>
    <property type="match status" value="1"/>
</dbReference>
<dbReference type="PANTHER" id="PTHR11638">
    <property type="entry name" value="ATP-DEPENDENT CLP PROTEASE"/>
    <property type="match status" value="1"/>
</dbReference>
<dbReference type="PANTHER" id="PTHR11638:SF18">
    <property type="entry name" value="HEAT SHOCK PROTEIN 104"/>
    <property type="match status" value="1"/>
</dbReference>
<dbReference type="Pfam" id="PF00004">
    <property type="entry name" value="AAA"/>
    <property type="match status" value="1"/>
</dbReference>
<dbReference type="Pfam" id="PF07724">
    <property type="entry name" value="AAA_2"/>
    <property type="match status" value="1"/>
</dbReference>
<dbReference type="Pfam" id="PF17871">
    <property type="entry name" value="AAA_lid_9"/>
    <property type="match status" value="1"/>
</dbReference>
<dbReference type="Pfam" id="PF02861">
    <property type="entry name" value="Clp_N"/>
    <property type="match status" value="2"/>
</dbReference>
<dbReference type="Pfam" id="PF10431">
    <property type="entry name" value="ClpB_D2-small"/>
    <property type="match status" value="1"/>
</dbReference>
<dbReference type="PRINTS" id="PR00300">
    <property type="entry name" value="CLPPROTEASEA"/>
</dbReference>
<dbReference type="SMART" id="SM00382">
    <property type="entry name" value="AAA"/>
    <property type="match status" value="2"/>
</dbReference>
<dbReference type="SMART" id="SM01086">
    <property type="entry name" value="ClpB_D2-small"/>
    <property type="match status" value="1"/>
</dbReference>
<dbReference type="SUPFAM" id="SSF81923">
    <property type="entry name" value="Double Clp-N motif"/>
    <property type="match status" value="1"/>
</dbReference>
<dbReference type="SUPFAM" id="SSF52540">
    <property type="entry name" value="P-loop containing nucleoside triphosphate hydrolases"/>
    <property type="match status" value="2"/>
</dbReference>
<dbReference type="PROSITE" id="PS51903">
    <property type="entry name" value="CLP_R"/>
    <property type="match status" value="1"/>
</dbReference>
<dbReference type="PROSITE" id="PS00870">
    <property type="entry name" value="CLPAB_1"/>
    <property type="match status" value="1"/>
</dbReference>
<dbReference type="PROSITE" id="PS00871">
    <property type="entry name" value="CLPAB_2"/>
    <property type="match status" value="1"/>
</dbReference>
<accession>Q72AW6</accession>
<organism>
    <name type="scientific">Nitratidesulfovibrio vulgaris (strain ATCC 29579 / DSM 644 / CCUG 34227 / NCIMB 8303 / VKM B-1760 / Hildenborough)</name>
    <name type="common">Desulfovibrio vulgaris</name>
    <dbReference type="NCBI Taxonomy" id="882"/>
    <lineage>
        <taxon>Bacteria</taxon>
        <taxon>Pseudomonadati</taxon>
        <taxon>Thermodesulfobacteriota</taxon>
        <taxon>Desulfovibrionia</taxon>
        <taxon>Desulfovibrionales</taxon>
        <taxon>Desulfovibrionaceae</taxon>
        <taxon>Nitratidesulfovibrio</taxon>
    </lineage>
</organism>
<comment type="function">
    <text evidence="1">Part of a stress-induced multi-chaperone system, it is involved in the recovery of the cell from heat-induced damage, in cooperation with DnaK, DnaJ and GrpE. Acts before DnaK, in the processing of protein aggregates. Protein binding stimulates the ATPase activity; ATP hydrolysis unfolds the denatured protein aggregates, which probably helps expose new hydrophobic binding sites on the surface of ClpB-bound aggregates, contributing to the solubilization and refolding of denatured protein aggregates by DnaK (By similarity).</text>
</comment>
<comment type="subunit">
    <text evidence="1">Homohexamer. The oligomerization is ATP-dependent (By similarity).</text>
</comment>
<comment type="subcellular location">
    <subcellularLocation>
        <location evidence="3">Cytoplasm</location>
    </subcellularLocation>
</comment>
<comment type="domain">
    <text evidence="1">The Clp repeat (R) domain probably functions as a substrate-discriminating domain, recruiting aggregated proteins to the ClpB hexamer and/or stabilizing bound proteins. The NBD2 domain is responsible for oligomerization, whereas the NBD1 domain stabilizes the hexamer probably in an ATP-dependent manner. The movement of the coiled-coil domain is essential for ClpB ability to rescue proteins from an aggregated state, probably by pulling apart large aggregated proteins, which are bound between the coiled-coils motifs of adjacent ClpB subunits in the functional hexamer (By similarity).</text>
</comment>
<comment type="similarity">
    <text evidence="3">Belongs to the ClpA/ClpB family.</text>
</comment>
<evidence type="ECO:0000250" key="1"/>
<evidence type="ECO:0000255" key="2">
    <source>
        <dbReference type="PROSITE-ProRule" id="PRU01251"/>
    </source>
</evidence>
<evidence type="ECO:0000305" key="3"/>
<protein>
    <recommendedName>
        <fullName>Chaperone protein ClpB</fullName>
    </recommendedName>
</protein>
<keyword id="KW-0067">ATP-binding</keyword>
<keyword id="KW-0143">Chaperone</keyword>
<keyword id="KW-0175">Coiled coil</keyword>
<keyword id="KW-0963">Cytoplasm</keyword>
<keyword id="KW-0547">Nucleotide-binding</keyword>
<keyword id="KW-1185">Reference proteome</keyword>
<keyword id="KW-0677">Repeat</keyword>
<keyword id="KW-0346">Stress response</keyword>